<protein>
    <recommendedName>
        <fullName>8.6 kDa transglutaminase substrate</fullName>
    </recommendedName>
</protein>
<organism>
    <name type="scientific">Tachypleus tridentatus</name>
    <name type="common">Japanese horseshoe crab</name>
    <dbReference type="NCBI Taxonomy" id="6853"/>
    <lineage>
        <taxon>Eukaryota</taxon>
        <taxon>Metazoa</taxon>
        <taxon>Ecdysozoa</taxon>
        <taxon>Arthropoda</taxon>
        <taxon>Chelicerata</taxon>
        <taxon>Merostomata</taxon>
        <taxon>Xiphosura</taxon>
        <taxon>Limulidae</taxon>
        <taxon>Tachypleus</taxon>
    </lineage>
</organism>
<reference key="1">
    <citation type="journal article" date="1993" name="J. Biol. Chem.">
        <title>Limulus hemocyte transglutaminase. Its purification and characterization, and identification of the intracellular substrates.</title>
        <authorList>
            <person name="Tokunaga F."/>
            <person name="Yamada M."/>
            <person name="Miyata T."/>
            <person name="Ding Y.L."/>
            <person name="Hiranaga-Kawabata M."/>
            <person name="Muta T."/>
            <person name="Iwanaga S."/>
            <person name="Ichinose A."/>
            <person name="Davie E.W."/>
        </authorList>
    </citation>
    <scope>PROTEIN SEQUENCE</scope>
    <source>
        <tissue>Hemocyte</tissue>
    </source>
</reference>
<accession>P81281</accession>
<proteinExistence type="evidence at protein level"/>
<keyword id="KW-0903">Direct protein sequencing</keyword>
<keyword id="KW-0353">Hemolymph clotting</keyword>
<name>TRGS_TACTR</name>
<dbReference type="PIR" id="A45320">
    <property type="entry name" value="A45320"/>
</dbReference>
<dbReference type="SMR" id="P81281"/>
<dbReference type="GO" id="GO:0042381">
    <property type="term" value="P:hemolymph coagulation"/>
    <property type="evidence" value="ECO:0007669"/>
    <property type="project" value="UniProtKB-KW"/>
</dbReference>
<dbReference type="Gene3D" id="4.10.40.20">
    <property type="match status" value="1"/>
</dbReference>
<dbReference type="InterPro" id="IPR009030">
    <property type="entry name" value="Growth_fac_rcpt_cys_sf"/>
</dbReference>
<dbReference type="SUPFAM" id="SSF57184">
    <property type="entry name" value="Growth factor receptor domain"/>
    <property type="match status" value="1"/>
</dbReference>
<feature type="chain" id="PRO_0000065629" description="8.6 kDa transglutaminase substrate">
    <location>
        <begin position="1"/>
        <end position="81"/>
    </location>
</feature>
<comment type="subunit">
    <text>Multimeric.</text>
</comment>
<comment type="tissue specificity">
    <text>Hemolymph; Hemocyte.</text>
</comment>
<sequence>TSQPDCSVGCDTSYCPDTSSCNCGTFADYCKCCQYCNACAGKTCNMIAGQSCEDGYLCRPPEGYSYIDVVTGRISSLCLRI</sequence>